<reference key="1">
    <citation type="journal article" date="2008" name="PLoS Genet.">
        <title>Genomic islands in the pathogenic filamentous fungus Aspergillus fumigatus.</title>
        <authorList>
            <person name="Fedorova N.D."/>
            <person name="Khaldi N."/>
            <person name="Joardar V.S."/>
            <person name="Maiti R."/>
            <person name="Amedeo P."/>
            <person name="Anderson M.J."/>
            <person name="Crabtree J."/>
            <person name="Silva J.C."/>
            <person name="Badger J.H."/>
            <person name="Albarraq A."/>
            <person name="Angiuoli S."/>
            <person name="Bussey H."/>
            <person name="Bowyer P."/>
            <person name="Cotty P.J."/>
            <person name="Dyer P.S."/>
            <person name="Egan A."/>
            <person name="Galens K."/>
            <person name="Fraser-Liggett C.M."/>
            <person name="Haas B.J."/>
            <person name="Inman J.M."/>
            <person name="Kent R."/>
            <person name="Lemieux S."/>
            <person name="Malavazi I."/>
            <person name="Orvis J."/>
            <person name="Roemer T."/>
            <person name="Ronning C.M."/>
            <person name="Sundaram J.P."/>
            <person name="Sutton G."/>
            <person name="Turner G."/>
            <person name="Venter J.C."/>
            <person name="White O.R."/>
            <person name="Whitty B.R."/>
            <person name="Youngman P."/>
            <person name="Wolfe K.H."/>
            <person name="Goldman G.H."/>
            <person name="Wortman J.R."/>
            <person name="Jiang B."/>
            <person name="Denning D.W."/>
            <person name="Nierman W.C."/>
        </authorList>
    </citation>
    <scope>NUCLEOTIDE SEQUENCE [LARGE SCALE GENOMIC DNA]</scope>
    <source>
        <strain>CBS 144.89 / FGSC A1163 / CEA10</strain>
    </source>
</reference>
<reference key="2">
    <citation type="journal article" date="2023" name="Microbiol. Spectr.">
        <title>The C2H2-Type transcription factor zfpA, Coordinately with crzA, affects azole susceptibility by regulating the multidrug transporter gene atrF in Aspergillus fumigatus.</title>
        <authorList>
            <person name="Li Y."/>
            <person name="Dai M."/>
            <person name="Lu L."/>
            <person name="Zhang Y."/>
        </authorList>
    </citation>
    <scope>FUNCTION</scope>
    <scope>DISRUPTION PHENOTYPE</scope>
    <scope>SUBCELLULAR LOCATION</scope>
</reference>
<dbReference type="EMBL" id="DS499600">
    <property type="protein sequence ID" value="EDP48807.1"/>
    <property type="molecule type" value="Genomic_DNA"/>
</dbReference>
<dbReference type="EnsemblFungi" id="EDP48807">
    <property type="protein sequence ID" value="EDP48807"/>
    <property type="gene ID" value="AFUB_082490"/>
</dbReference>
<dbReference type="VEuPathDB" id="FungiDB:AFUB_082490"/>
<dbReference type="HOGENOM" id="CLU_017895_1_1_1"/>
<dbReference type="OrthoDB" id="106976at5052"/>
<dbReference type="PhylomeDB" id="B0Y9W4"/>
<dbReference type="Proteomes" id="UP000001699">
    <property type="component" value="Unassembled WGS sequence"/>
</dbReference>
<dbReference type="GO" id="GO:0005634">
    <property type="term" value="C:nucleus"/>
    <property type="evidence" value="ECO:0007669"/>
    <property type="project" value="UniProtKB-SubCell"/>
</dbReference>
<dbReference type="GO" id="GO:0008270">
    <property type="term" value="F:zinc ion binding"/>
    <property type="evidence" value="ECO:0007669"/>
    <property type="project" value="UniProtKB-KW"/>
</dbReference>
<dbReference type="GO" id="GO:0006357">
    <property type="term" value="P:regulation of transcription by RNA polymerase II"/>
    <property type="evidence" value="ECO:0007669"/>
    <property type="project" value="TreeGrafter"/>
</dbReference>
<dbReference type="Gene3D" id="3.30.160.60">
    <property type="entry name" value="Classic Zinc Finger"/>
    <property type="match status" value="1"/>
</dbReference>
<dbReference type="InterPro" id="IPR051061">
    <property type="entry name" value="Zinc_finger_trans_reg"/>
</dbReference>
<dbReference type="InterPro" id="IPR036236">
    <property type="entry name" value="Znf_C2H2_sf"/>
</dbReference>
<dbReference type="InterPro" id="IPR013087">
    <property type="entry name" value="Znf_C2H2_type"/>
</dbReference>
<dbReference type="PANTHER" id="PTHR46179:SF13">
    <property type="entry name" value="C2H2-TYPE DOMAIN-CONTAINING PROTEIN"/>
    <property type="match status" value="1"/>
</dbReference>
<dbReference type="PANTHER" id="PTHR46179">
    <property type="entry name" value="ZINC FINGER PROTEIN"/>
    <property type="match status" value="1"/>
</dbReference>
<dbReference type="SMART" id="SM00355">
    <property type="entry name" value="ZnF_C2H2"/>
    <property type="match status" value="4"/>
</dbReference>
<dbReference type="SUPFAM" id="SSF57667">
    <property type="entry name" value="beta-beta-alpha zinc fingers"/>
    <property type="match status" value="1"/>
</dbReference>
<sequence>MLALDSSRQQQTSYFQDVHMDPALVDPFGFQMDNLGGFGQTSGPTSAPTSYYGTSPVYADSQLEPKTSAFPPMPPTPPSLPVPYSTEPYMSGLSSASGPSIASASSSAIGSPYSCTAHTFPESWVDTNHGIGLPAAVMDEFFPNEFMGSSLEADHTYQRKGPDDFVEHSNFSANCGFFLQSPDQSHLPVAENYSADHLSQTGLAVSSPMPNSGPHSRSVSIYDRRSSISSTNSRRSQLSPAASVADFDEESKEKGRCPHPDCGRVFKDLKAHMLTHQSERPEKCPIVTCEYHVKGFARKYDKNRHTLTHYKGTMVCGFCPGSGSPAEKSFNRADVFKRHLTSVHGVEQTPPNCRKRSPGASSVKKVSDYCQDATGKCSTCSATFSNAQDFYEHLDDCVLRVVQQVEPSEVINQQRLAEVDCDEEVKKTMEKHKLLDAAGDVDDEPEEDDDDYNELNLQLRSSKGAFKSNKANSSLGSRPIMGNHNAVTKNGKARATISKRRNNRDRYPPSWGCPSSSMKTKKRVLCVFDGQRRLWKDEMMLDNEFEVRLKLPGGAGDGTNREAYITDLDVETLKRAEGVLSANEDEKGPWLEGPATHFMGQPAKMLPALSHTHEDVDIDDLMS</sequence>
<name>ZFPA_ASPFC</name>
<keyword id="KW-0479">Metal-binding</keyword>
<keyword id="KW-0539">Nucleus</keyword>
<keyword id="KW-0804">Transcription</keyword>
<keyword id="KW-0805">Transcription regulation</keyword>
<keyword id="KW-0862">Zinc</keyword>
<keyword id="KW-0863">Zinc-finger</keyword>
<protein>
    <recommendedName>
        <fullName evidence="4">C2H2-type transcription factor zfpA</fullName>
    </recommendedName>
    <alternativeName>
        <fullName evidence="4">zinc finger protein A</fullName>
    </alternativeName>
</protein>
<comment type="function">
    <text evidence="3">Transcription factor involved in fungal growth and virulence potential (PubMed:37318356). Negatively regulates antifungal drug susceptibility via transcriptional inhibition of the expressions of drug efflux pumps in a crzA-dependent way (PubMed:37318356). Under the treatment of azoles, both zfpA and crzA transfer to nuclei and coregulate the expression of multidrug transporters and then keep normal drug susceptibility in fungal cells (PubMed:37318356).</text>
</comment>
<comment type="subcellular location">
    <subcellularLocation>
        <location evidence="3">Nucleus</location>
    </subcellularLocation>
    <text evidence="3">Azole antifungals induce nuclear localization.</text>
</comment>
<comment type="disruption phenotype">
    <text evidence="3">Leads to decreased hyphal growth, azole susceptibility, and attenuated animal virulence (PubMed:37318356). Results in the marked up-regulation of a series of drug efflux pump-encoding genes, especially atrF, which contributes to azole drug resistance (PubMed:37318356).</text>
</comment>
<proteinExistence type="predicted"/>
<evidence type="ECO:0000255" key="1">
    <source>
        <dbReference type="PROSITE-ProRule" id="PRU00042"/>
    </source>
</evidence>
<evidence type="ECO:0000256" key="2">
    <source>
        <dbReference type="SAM" id="MobiDB-lite"/>
    </source>
</evidence>
<evidence type="ECO:0000269" key="3">
    <source>
    </source>
</evidence>
<evidence type="ECO:0000303" key="4">
    <source>
    </source>
</evidence>
<feature type="chain" id="PRO_0000459086" description="C2H2-type transcription factor zfpA">
    <location>
        <begin position="1"/>
        <end position="623"/>
    </location>
</feature>
<feature type="zinc finger region" description="C2H2-type" evidence="1">
    <location>
        <begin position="255"/>
        <end position="276"/>
    </location>
</feature>
<feature type="region of interest" description="Disordered" evidence="2">
    <location>
        <begin position="202"/>
        <end position="256"/>
    </location>
</feature>
<feature type="region of interest" description="Disordered" evidence="2">
    <location>
        <begin position="468"/>
        <end position="493"/>
    </location>
</feature>
<feature type="compositionally biased region" description="Polar residues" evidence="2">
    <location>
        <begin position="202"/>
        <end position="219"/>
    </location>
</feature>
<feature type="compositionally biased region" description="Low complexity" evidence="2">
    <location>
        <begin position="227"/>
        <end position="239"/>
    </location>
</feature>
<organism>
    <name type="scientific">Aspergillus fumigatus (strain CBS 144.89 / FGSC A1163 / CEA10)</name>
    <name type="common">Neosartorya fumigata</name>
    <dbReference type="NCBI Taxonomy" id="451804"/>
    <lineage>
        <taxon>Eukaryota</taxon>
        <taxon>Fungi</taxon>
        <taxon>Dikarya</taxon>
        <taxon>Ascomycota</taxon>
        <taxon>Pezizomycotina</taxon>
        <taxon>Eurotiomycetes</taxon>
        <taxon>Eurotiomycetidae</taxon>
        <taxon>Eurotiales</taxon>
        <taxon>Aspergillaceae</taxon>
        <taxon>Aspergillus</taxon>
        <taxon>Aspergillus subgen. Fumigati</taxon>
    </lineage>
</organism>
<accession>B0Y9W4</accession>
<gene>
    <name evidence="4" type="primary">zfpA</name>
    <name type="ORF">AFUB_082490</name>
</gene>